<name>SYS_NOSS1</name>
<gene>
    <name evidence="1" type="primary">serS</name>
    <name type="ordered locus">all3976</name>
</gene>
<organism>
    <name type="scientific">Nostoc sp. (strain PCC 7120 / SAG 25.82 / UTEX 2576)</name>
    <dbReference type="NCBI Taxonomy" id="103690"/>
    <lineage>
        <taxon>Bacteria</taxon>
        <taxon>Bacillati</taxon>
        <taxon>Cyanobacteriota</taxon>
        <taxon>Cyanophyceae</taxon>
        <taxon>Nostocales</taxon>
        <taxon>Nostocaceae</taxon>
        <taxon>Nostoc</taxon>
    </lineage>
</organism>
<protein>
    <recommendedName>
        <fullName evidence="1">Serine--tRNA ligase</fullName>
        <ecNumber evidence="1">6.1.1.11</ecNumber>
    </recommendedName>
    <alternativeName>
        <fullName evidence="1">Seryl-tRNA synthetase</fullName>
        <shortName evidence="1">SerRS</shortName>
    </alternativeName>
    <alternativeName>
        <fullName evidence="1">Seryl-tRNA(Ser/Sec) synthetase</fullName>
    </alternativeName>
</protein>
<dbReference type="EC" id="6.1.1.11" evidence="1"/>
<dbReference type="EMBL" id="BA000019">
    <property type="protein sequence ID" value="BAB75675.1"/>
    <property type="molecule type" value="Genomic_DNA"/>
</dbReference>
<dbReference type="PIR" id="AI2302">
    <property type="entry name" value="AI2302"/>
</dbReference>
<dbReference type="RefSeq" id="WP_010998117.1">
    <property type="nucleotide sequence ID" value="NZ_RSCN01000045.1"/>
</dbReference>
<dbReference type="SMR" id="Q8YQ59"/>
<dbReference type="STRING" id="103690.gene:10496018"/>
<dbReference type="KEGG" id="ana:all3976"/>
<dbReference type="eggNOG" id="COG0172">
    <property type="taxonomic scope" value="Bacteria"/>
</dbReference>
<dbReference type="OrthoDB" id="9804647at2"/>
<dbReference type="UniPathway" id="UPA00906">
    <property type="reaction ID" value="UER00895"/>
</dbReference>
<dbReference type="Proteomes" id="UP000002483">
    <property type="component" value="Chromosome"/>
</dbReference>
<dbReference type="GO" id="GO:0005737">
    <property type="term" value="C:cytoplasm"/>
    <property type="evidence" value="ECO:0007669"/>
    <property type="project" value="UniProtKB-SubCell"/>
</dbReference>
<dbReference type="GO" id="GO:0005524">
    <property type="term" value="F:ATP binding"/>
    <property type="evidence" value="ECO:0007669"/>
    <property type="project" value="UniProtKB-UniRule"/>
</dbReference>
<dbReference type="GO" id="GO:0004828">
    <property type="term" value="F:serine-tRNA ligase activity"/>
    <property type="evidence" value="ECO:0007669"/>
    <property type="project" value="UniProtKB-UniRule"/>
</dbReference>
<dbReference type="GO" id="GO:0016260">
    <property type="term" value="P:selenocysteine biosynthetic process"/>
    <property type="evidence" value="ECO:0007669"/>
    <property type="project" value="UniProtKB-UniRule"/>
</dbReference>
<dbReference type="GO" id="GO:0006434">
    <property type="term" value="P:seryl-tRNA aminoacylation"/>
    <property type="evidence" value="ECO:0007669"/>
    <property type="project" value="UniProtKB-UniRule"/>
</dbReference>
<dbReference type="CDD" id="cd00770">
    <property type="entry name" value="SerRS_core"/>
    <property type="match status" value="1"/>
</dbReference>
<dbReference type="Gene3D" id="3.30.930.10">
    <property type="entry name" value="Bira Bifunctional Protein, Domain 2"/>
    <property type="match status" value="1"/>
</dbReference>
<dbReference type="Gene3D" id="1.10.287.40">
    <property type="entry name" value="Serine-tRNA synthetase, tRNA binding domain"/>
    <property type="match status" value="1"/>
</dbReference>
<dbReference type="HAMAP" id="MF_00176">
    <property type="entry name" value="Ser_tRNA_synth_type1"/>
    <property type="match status" value="1"/>
</dbReference>
<dbReference type="InterPro" id="IPR002314">
    <property type="entry name" value="aa-tRNA-synt_IIb"/>
</dbReference>
<dbReference type="InterPro" id="IPR006195">
    <property type="entry name" value="aa-tRNA-synth_II"/>
</dbReference>
<dbReference type="InterPro" id="IPR045864">
    <property type="entry name" value="aa-tRNA-synth_II/BPL/LPL"/>
</dbReference>
<dbReference type="InterPro" id="IPR002317">
    <property type="entry name" value="Ser-tRNA-ligase_type_1"/>
</dbReference>
<dbReference type="InterPro" id="IPR015866">
    <property type="entry name" value="Ser-tRNA-synth_1_N"/>
</dbReference>
<dbReference type="InterPro" id="IPR042103">
    <property type="entry name" value="SerRS_1_N_sf"/>
</dbReference>
<dbReference type="InterPro" id="IPR033729">
    <property type="entry name" value="SerRS_core"/>
</dbReference>
<dbReference type="InterPro" id="IPR010978">
    <property type="entry name" value="tRNA-bd_arm"/>
</dbReference>
<dbReference type="NCBIfam" id="TIGR00414">
    <property type="entry name" value="serS"/>
    <property type="match status" value="1"/>
</dbReference>
<dbReference type="PANTHER" id="PTHR43697:SF1">
    <property type="entry name" value="SERINE--TRNA LIGASE"/>
    <property type="match status" value="1"/>
</dbReference>
<dbReference type="PANTHER" id="PTHR43697">
    <property type="entry name" value="SERYL-TRNA SYNTHETASE"/>
    <property type="match status" value="1"/>
</dbReference>
<dbReference type="Pfam" id="PF02403">
    <property type="entry name" value="Seryl_tRNA_N"/>
    <property type="match status" value="1"/>
</dbReference>
<dbReference type="Pfam" id="PF00587">
    <property type="entry name" value="tRNA-synt_2b"/>
    <property type="match status" value="1"/>
</dbReference>
<dbReference type="PIRSF" id="PIRSF001529">
    <property type="entry name" value="Ser-tRNA-synth_IIa"/>
    <property type="match status" value="1"/>
</dbReference>
<dbReference type="PRINTS" id="PR00981">
    <property type="entry name" value="TRNASYNTHSER"/>
</dbReference>
<dbReference type="SUPFAM" id="SSF55681">
    <property type="entry name" value="Class II aaRS and biotin synthetases"/>
    <property type="match status" value="1"/>
</dbReference>
<dbReference type="SUPFAM" id="SSF46589">
    <property type="entry name" value="tRNA-binding arm"/>
    <property type="match status" value="1"/>
</dbReference>
<dbReference type="PROSITE" id="PS50862">
    <property type="entry name" value="AA_TRNA_LIGASE_II"/>
    <property type="match status" value="1"/>
</dbReference>
<comment type="function">
    <text evidence="1">Catalyzes the attachment of serine to tRNA(Ser). Is also able to aminoacylate tRNA(Sec) with serine, to form the misacylated tRNA L-seryl-tRNA(Sec), which will be further converted into selenocysteinyl-tRNA(Sec).</text>
</comment>
<comment type="catalytic activity">
    <reaction evidence="1">
        <text>tRNA(Ser) + L-serine + ATP = L-seryl-tRNA(Ser) + AMP + diphosphate + H(+)</text>
        <dbReference type="Rhea" id="RHEA:12292"/>
        <dbReference type="Rhea" id="RHEA-COMP:9669"/>
        <dbReference type="Rhea" id="RHEA-COMP:9703"/>
        <dbReference type="ChEBI" id="CHEBI:15378"/>
        <dbReference type="ChEBI" id="CHEBI:30616"/>
        <dbReference type="ChEBI" id="CHEBI:33019"/>
        <dbReference type="ChEBI" id="CHEBI:33384"/>
        <dbReference type="ChEBI" id="CHEBI:78442"/>
        <dbReference type="ChEBI" id="CHEBI:78533"/>
        <dbReference type="ChEBI" id="CHEBI:456215"/>
        <dbReference type="EC" id="6.1.1.11"/>
    </reaction>
</comment>
<comment type="catalytic activity">
    <reaction evidence="1">
        <text>tRNA(Sec) + L-serine + ATP = L-seryl-tRNA(Sec) + AMP + diphosphate + H(+)</text>
        <dbReference type="Rhea" id="RHEA:42580"/>
        <dbReference type="Rhea" id="RHEA-COMP:9742"/>
        <dbReference type="Rhea" id="RHEA-COMP:10128"/>
        <dbReference type="ChEBI" id="CHEBI:15378"/>
        <dbReference type="ChEBI" id="CHEBI:30616"/>
        <dbReference type="ChEBI" id="CHEBI:33019"/>
        <dbReference type="ChEBI" id="CHEBI:33384"/>
        <dbReference type="ChEBI" id="CHEBI:78442"/>
        <dbReference type="ChEBI" id="CHEBI:78533"/>
        <dbReference type="ChEBI" id="CHEBI:456215"/>
        <dbReference type="EC" id="6.1.1.11"/>
    </reaction>
</comment>
<comment type="pathway">
    <text evidence="1">Aminoacyl-tRNA biosynthesis; selenocysteinyl-tRNA(Sec) biosynthesis; L-seryl-tRNA(Sec) from L-serine and tRNA(Sec): step 1/1.</text>
</comment>
<comment type="subunit">
    <text evidence="1">Homodimer. The tRNA molecule binds across the dimer.</text>
</comment>
<comment type="subcellular location">
    <subcellularLocation>
        <location evidence="1">Cytoplasm</location>
    </subcellularLocation>
</comment>
<comment type="domain">
    <text evidence="1">Consists of two distinct domains, a catalytic core and a N-terminal extension that is involved in tRNA binding.</text>
</comment>
<comment type="similarity">
    <text evidence="1">Belongs to the class-II aminoacyl-tRNA synthetase family. Type-1 seryl-tRNA synthetase subfamily.</text>
</comment>
<feature type="chain" id="PRO_0000121994" description="Serine--tRNA ligase">
    <location>
        <begin position="1"/>
        <end position="426"/>
    </location>
</feature>
<feature type="binding site" evidence="1">
    <location>
        <begin position="235"/>
        <end position="237"/>
    </location>
    <ligand>
        <name>L-serine</name>
        <dbReference type="ChEBI" id="CHEBI:33384"/>
    </ligand>
</feature>
<feature type="binding site" evidence="1">
    <location>
        <begin position="266"/>
        <end position="268"/>
    </location>
    <ligand>
        <name>ATP</name>
        <dbReference type="ChEBI" id="CHEBI:30616"/>
    </ligand>
</feature>
<feature type="binding site" evidence="1">
    <location>
        <position position="289"/>
    </location>
    <ligand>
        <name>L-serine</name>
        <dbReference type="ChEBI" id="CHEBI:33384"/>
    </ligand>
</feature>
<feature type="binding site" evidence="1">
    <location>
        <begin position="353"/>
        <end position="356"/>
    </location>
    <ligand>
        <name>ATP</name>
        <dbReference type="ChEBI" id="CHEBI:30616"/>
    </ligand>
</feature>
<feature type="binding site" evidence="1">
    <location>
        <position position="389"/>
    </location>
    <ligand>
        <name>L-serine</name>
        <dbReference type="ChEBI" id="CHEBI:33384"/>
    </ligand>
</feature>
<sequence length="426" mass="47676">MLDIKQIRENPQLIQERLNSRNGTYDIQPILQLDKQQRELEATRSQIQARSNEIGKIVGQKIKSGINPQDPEIQALRDEGNAIKAQLSELEPREKELKAEIEQLILALPNLPSDSTPIGKGEEENVEVRLWGDEYLPQNPNIIPHWEIGEKLGILNFERAVKVAQSRFVNLIGAGAALERALINFMLKMQTAAGYIEVSPPLLVNTDSLTGTGQLPKFAEESFKCADDELWLIPTAEVPVTNLYRGEILAAENLPIYHCAYTPCFRREAGSYGRDMRGLIRLHQFNKVELVKVVHPSTSFDELEKLVGNAEAILQALKLPYRVINLCTGDLGFGATKTYDLEVWLPSSGKYREISSCSNCFDFQARRADIRFKEAGKKGTQFVHTLNGSGLAVGRTMAAILENYQQPDGTILIPEVLQPFLGREVL</sequence>
<accession>Q8YQ59</accession>
<proteinExistence type="inferred from homology"/>
<reference key="1">
    <citation type="journal article" date="2001" name="DNA Res.">
        <title>Complete genomic sequence of the filamentous nitrogen-fixing cyanobacterium Anabaena sp. strain PCC 7120.</title>
        <authorList>
            <person name="Kaneko T."/>
            <person name="Nakamura Y."/>
            <person name="Wolk C.P."/>
            <person name="Kuritz T."/>
            <person name="Sasamoto S."/>
            <person name="Watanabe A."/>
            <person name="Iriguchi M."/>
            <person name="Ishikawa A."/>
            <person name="Kawashima K."/>
            <person name="Kimura T."/>
            <person name="Kishida Y."/>
            <person name="Kohara M."/>
            <person name="Matsumoto M."/>
            <person name="Matsuno A."/>
            <person name="Muraki A."/>
            <person name="Nakazaki N."/>
            <person name="Shimpo S."/>
            <person name="Sugimoto M."/>
            <person name="Takazawa M."/>
            <person name="Yamada M."/>
            <person name="Yasuda M."/>
            <person name="Tabata S."/>
        </authorList>
    </citation>
    <scope>NUCLEOTIDE SEQUENCE [LARGE SCALE GENOMIC DNA]</scope>
    <source>
        <strain>PCC 7120 / SAG 25.82 / UTEX 2576</strain>
    </source>
</reference>
<evidence type="ECO:0000255" key="1">
    <source>
        <dbReference type="HAMAP-Rule" id="MF_00176"/>
    </source>
</evidence>
<keyword id="KW-0030">Aminoacyl-tRNA synthetase</keyword>
<keyword id="KW-0067">ATP-binding</keyword>
<keyword id="KW-0963">Cytoplasm</keyword>
<keyword id="KW-0436">Ligase</keyword>
<keyword id="KW-0547">Nucleotide-binding</keyword>
<keyword id="KW-0648">Protein biosynthesis</keyword>
<keyword id="KW-1185">Reference proteome</keyword>